<organism>
    <name type="scientific">Picrophilus torridus (strain ATCC 700027 / DSM 9790 / JCM 10055 / NBRC 100828 / KAW 2/3)</name>
    <dbReference type="NCBI Taxonomy" id="1122961"/>
    <lineage>
        <taxon>Archaea</taxon>
        <taxon>Methanobacteriati</taxon>
        <taxon>Thermoplasmatota</taxon>
        <taxon>Thermoplasmata</taxon>
        <taxon>Thermoplasmatales</taxon>
        <taxon>Picrophilaceae</taxon>
        <taxon>Picrophilus</taxon>
    </lineage>
</organism>
<evidence type="ECO:0000255" key="1">
    <source>
        <dbReference type="HAMAP-Rule" id="MF_01615"/>
    </source>
</evidence>
<comment type="function">
    <text evidence="1">Catalyzes the hydrolysis of glutamine to glutamate and ammonia as part of the biosynthesis of pyridoxal 5'-phosphate. The resulting ammonia molecule is channeled to the active site of PdxS.</text>
</comment>
<comment type="catalytic activity">
    <reaction evidence="1">
        <text>aldehydo-D-ribose 5-phosphate + D-glyceraldehyde 3-phosphate + L-glutamine = pyridoxal 5'-phosphate + L-glutamate + phosphate + 3 H2O + H(+)</text>
        <dbReference type="Rhea" id="RHEA:31507"/>
        <dbReference type="ChEBI" id="CHEBI:15377"/>
        <dbReference type="ChEBI" id="CHEBI:15378"/>
        <dbReference type="ChEBI" id="CHEBI:29985"/>
        <dbReference type="ChEBI" id="CHEBI:43474"/>
        <dbReference type="ChEBI" id="CHEBI:58273"/>
        <dbReference type="ChEBI" id="CHEBI:58359"/>
        <dbReference type="ChEBI" id="CHEBI:59776"/>
        <dbReference type="ChEBI" id="CHEBI:597326"/>
        <dbReference type="EC" id="4.3.3.6"/>
    </reaction>
</comment>
<comment type="catalytic activity">
    <reaction evidence="1">
        <text>L-glutamine + H2O = L-glutamate + NH4(+)</text>
        <dbReference type="Rhea" id="RHEA:15889"/>
        <dbReference type="ChEBI" id="CHEBI:15377"/>
        <dbReference type="ChEBI" id="CHEBI:28938"/>
        <dbReference type="ChEBI" id="CHEBI:29985"/>
        <dbReference type="ChEBI" id="CHEBI:58359"/>
        <dbReference type="EC" id="3.5.1.2"/>
    </reaction>
</comment>
<comment type="pathway">
    <text evidence="1">Cofactor biosynthesis; pyridoxal 5'-phosphate biosynthesis.</text>
</comment>
<comment type="subunit">
    <text evidence="1">In the presence of PdxS, forms a dodecamer of heterodimers. Only shows activity in the heterodimer.</text>
</comment>
<comment type="similarity">
    <text evidence="1">Belongs to the glutaminase PdxT/SNO family.</text>
</comment>
<name>PDXT_PICTO</name>
<reference key="1">
    <citation type="journal article" date="2004" name="Proc. Natl. Acad. Sci. U.S.A.">
        <title>Genome sequence of Picrophilus torridus and its implications for life around pH 0.</title>
        <authorList>
            <person name="Fuetterer O."/>
            <person name="Angelov A."/>
            <person name="Liesegang H."/>
            <person name="Gottschalk G."/>
            <person name="Schleper C."/>
            <person name="Schepers B."/>
            <person name="Dock C."/>
            <person name="Antranikian G."/>
            <person name="Liebl W."/>
        </authorList>
    </citation>
    <scope>NUCLEOTIDE SEQUENCE [LARGE SCALE GENOMIC DNA]</scope>
    <source>
        <strain>ATCC 700027 / DSM 9790 / JCM 10055 / NBRC 100828 / KAW 2/3</strain>
    </source>
</reference>
<protein>
    <recommendedName>
        <fullName evidence="1">Pyridoxal 5'-phosphate synthase subunit PdxT</fullName>
        <ecNumber evidence="1">4.3.3.6</ecNumber>
    </recommendedName>
    <alternativeName>
        <fullName evidence="1">Pdx2</fullName>
    </alternativeName>
    <alternativeName>
        <fullName evidence="1">Pyridoxal 5'-phosphate synthase glutaminase subunit</fullName>
        <ecNumber evidence="1">3.5.1.2</ecNumber>
    </alternativeName>
</protein>
<gene>
    <name evidence="1" type="primary">pdxT</name>
    <name type="ordered locus">PTO0504</name>
</gene>
<dbReference type="EC" id="4.3.3.6" evidence="1"/>
<dbReference type="EC" id="3.5.1.2" evidence="1"/>
<dbReference type="EMBL" id="AE017261">
    <property type="protein sequence ID" value="AAT43089.1"/>
    <property type="molecule type" value="Genomic_DNA"/>
</dbReference>
<dbReference type="RefSeq" id="WP_011177305.1">
    <property type="nucleotide sequence ID" value="NC_005877.1"/>
</dbReference>
<dbReference type="SMR" id="Q6L1R3"/>
<dbReference type="FunCoup" id="Q6L1R3">
    <property type="interactions" value="77"/>
</dbReference>
<dbReference type="STRING" id="263820.PTO0504"/>
<dbReference type="PaxDb" id="263820-PTO0504"/>
<dbReference type="GeneID" id="2843977"/>
<dbReference type="KEGG" id="pto:PTO0504"/>
<dbReference type="PATRIC" id="fig|263820.9.peg.531"/>
<dbReference type="eggNOG" id="arCOG00034">
    <property type="taxonomic scope" value="Archaea"/>
</dbReference>
<dbReference type="HOGENOM" id="CLU_069674_2_0_2"/>
<dbReference type="InParanoid" id="Q6L1R3"/>
<dbReference type="OrthoDB" id="26717at2157"/>
<dbReference type="UniPathway" id="UPA00245"/>
<dbReference type="Proteomes" id="UP000000438">
    <property type="component" value="Chromosome"/>
</dbReference>
<dbReference type="GO" id="GO:0005829">
    <property type="term" value="C:cytosol"/>
    <property type="evidence" value="ECO:0007669"/>
    <property type="project" value="TreeGrafter"/>
</dbReference>
<dbReference type="GO" id="GO:1903600">
    <property type="term" value="C:glutaminase complex"/>
    <property type="evidence" value="ECO:0007669"/>
    <property type="project" value="TreeGrafter"/>
</dbReference>
<dbReference type="GO" id="GO:0004359">
    <property type="term" value="F:glutaminase activity"/>
    <property type="evidence" value="ECO:0007669"/>
    <property type="project" value="UniProtKB-UniRule"/>
</dbReference>
<dbReference type="GO" id="GO:0036381">
    <property type="term" value="F:pyridoxal 5'-phosphate synthase (glutamine hydrolysing) activity"/>
    <property type="evidence" value="ECO:0007669"/>
    <property type="project" value="UniProtKB-UniRule"/>
</dbReference>
<dbReference type="GO" id="GO:0006543">
    <property type="term" value="P:glutamine catabolic process"/>
    <property type="evidence" value="ECO:0007669"/>
    <property type="project" value="UniProtKB-UniRule"/>
</dbReference>
<dbReference type="GO" id="GO:0042823">
    <property type="term" value="P:pyridoxal phosphate biosynthetic process"/>
    <property type="evidence" value="ECO:0007669"/>
    <property type="project" value="UniProtKB-UniRule"/>
</dbReference>
<dbReference type="GO" id="GO:0008614">
    <property type="term" value="P:pyridoxine metabolic process"/>
    <property type="evidence" value="ECO:0007669"/>
    <property type="project" value="TreeGrafter"/>
</dbReference>
<dbReference type="CDD" id="cd01749">
    <property type="entry name" value="GATase1_PB"/>
    <property type="match status" value="1"/>
</dbReference>
<dbReference type="FunFam" id="3.40.50.880:FF:000010">
    <property type="entry name" value="uncharacterized protein LOC100176842 isoform X2"/>
    <property type="match status" value="1"/>
</dbReference>
<dbReference type="Gene3D" id="3.40.50.880">
    <property type="match status" value="1"/>
</dbReference>
<dbReference type="HAMAP" id="MF_01615">
    <property type="entry name" value="PdxT"/>
    <property type="match status" value="1"/>
</dbReference>
<dbReference type="InterPro" id="IPR029062">
    <property type="entry name" value="Class_I_gatase-like"/>
</dbReference>
<dbReference type="InterPro" id="IPR002161">
    <property type="entry name" value="PdxT/SNO"/>
</dbReference>
<dbReference type="InterPro" id="IPR021196">
    <property type="entry name" value="PdxT/SNO_CS"/>
</dbReference>
<dbReference type="NCBIfam" id="TIGR03800">
    <property type="entry name" value="PLP_synth_Pdx2"/>
    <property type="match status" value="1"/>
</dbReference>
<dbReference type="PANTHER" id="PTHR31559">
    <property type="entry name" value="PYRIDOXAL 5'-PHOSPHATE SYNTHASE SUBUNIT SNO"/>
    <property type="match status" value="1"/>
</dbReference>
<dbReference type="PANTHER" id="PTHR31559:SF0">
    <property type="entry name" value="PYRIDOXAL 5'-PHOSPHATE SYNTHASE SUBUNIT SNO1-RELATED"/>
    <property type="match status" value="1"/>
</dbReference>
<dbReference type="Pfam" id="PF01174">
    <property type="entry name" value="SNO"/>
    <property type="match status" value="1"/>
</dbReference>
<dbReference type="PIRSF" id="PIRSF005639">
    <property type="entry name" value="Glut_amidoT_SNO"/>
    <property type="match status" value="1"/>
</dbReference>
<dbReference type="SUPFAM" id="SSF52317">
    <property type="entry name" value="Class I glutamine amidotransferase-like"/>
    <property type="match status" value="1"/>
</dbReference>
<dbReference type="PROSITE" id="PS01236">
    <property type="entry name" value="PDXT_SNO_1"/>
    <property type="match status" value="1"/>
</dbReference>
<dbReference type="PROSITE" id="PS51130">
    <property type="entry name" value="PDXT_SNO_2"/>
    <property type="match status" value="1"/>
</dbReference>
<proteinExistence type="inferred from homology"/>
<accession>Q6L1R3</accession>
<keyword id="KW-0315">Glutamine amidotransferase</keyword>
<keyword id="KW-0378">Hydrolase</keyword>
<keyword id="KW-0456">Lyase</keyword>
<keyword id="KW-0663">Pyridoxal phosphate</keyword>
<sequence>MKIGVLGIQGDVYEHYTAIRPLKNKYKVEAYIIRSPEEINEMDGIIIPGGESTTITRFLSRYINIINENVRNGMKIMGTCAGAIILSKDTGDPRVHGTGIMDIKIQRNAYGRQIDSFIDAVNIKNIGTFNAVFIRAPVIDDPGKTSVLGEYNGKPVIVENENAIAMTFHPELTGDLRVHEYFLRKVMGN</sequence>
<feature type="chain" id="PRO_0000135685" description="Pyridoxal 5'-phosphate synthase subunit PdxT">
    <location>
        <begin position="1"/>
        <end position="189"/>
    </location>
</feature>
<feature type="active site" description="Nucleophile" evidence="1">
    <location>
        <position position="80"/>
    </location>
</feature>
<feature type="active site" description="Charge relay system" evidence="1">
    <location>
        <position position="169"/>
    </location>
</feature>
<feature type="active site" description="Charge relay system" evidence="1">
    <location>
        <position position="171"/>
    </location>
</feature>
<feature type="binding site" evidence="1">
    <location>
        <begin position="50"/>
        <end position="52"/>
    </location>
    <ligand>
        <name>L-glutamine</name>
        <dbReference type="ChEBI" id="CHEBI:58359"/>
    </ligand>
</feature>
<feature type="binding site" evidence="1">
    <location>
        <position position="107"/>
    </location>
    <ligand>
        <name>L-glutamine</name>
        <dbReference type="ChEBI" id="CHEBI:58359"/>
    </ligand>
</feature>
<feature type="binding site" evidence="1">
    <location>
        <begin position="134"/>
        <end position="135"/>
    </location>
    <ligand>
        <name>L-glutamine</name>
        <dbReference type="ChEBI" id="CHEBI:58359"/>
    </ligand>
</feature>